<keyword id="KW-0002">3D-structure</keyword>
<keyword id="KW-0426">Late protein</keyword>
<keyword id="KW-1172">Pore-mediated penetration of viral genome into host cell</keyword>
<keyword id="KW-1185">Reference proteome</keyword>
<keyword id="KW-1171">Viral genome ejection through host cell envelope</keyword>
<keyword id="KW-1162">Viral penetration into host cytoplasm</keyword>
<keyword id="KW-1244">Viral short tail ejection system</keyword>
<keyword id="KW-1227">Viral tail protein</keyword>
<keyword id="KW-1228">Viral tail tube protein</keyword>
<keyword id="KW-0946">Virion</keyword>
<keyword id="KW-1160">Virus entry into host cell</keyword>
<protein>
    <recommendedName>
        <fullName evidence="5">Tail knob protein gp9</fullName>
    </recommendedName>
    <alternativeName>
        <fullName evidence="6">Distal tube protein</fullName>
    </alternativeName>
    <alternativeName>
        <fullName evidence="6">Gene product 9</fullName>
        <shortName evidence="6">gp9</shortName>
    </alternativeName>
    <alternativeName>
        <fullName evidence="6">Protein p9</fullName>
    </alternativeName>
</protein>
<comment type="function">
    <text evidence="2 3">Distal (knob) tail protein that plugs the end of the tube before DNA ejection and forms a channel perforating the host membrane during ejection.</text>
</comment>
<comment type="subunit">
    <text evidence="3">Homohexamer; forms a hexameric tube structure with six flexible hydrophobic loops.</text>
</comment>
<comment type="subcellular location">
    <subcellularLocation>
        <location evidence="1 3 4">Virion</location>
    </subcellularLocation>
    <text evidence="1 2 3">Present in 6 copies in the virion (PubMed:27309813). Located at the tip of the tail and constitutes most of the tail knob (PubMed:18606992, PubMed:27309813).</text>
</comment>
<sequence>MAYVPLSGTNVRILADVPFSNDYKNTRWFTSSSNQYNWFNRKSRVYEMSKVTFMGFRENKPYVSVSLPIDKLYSASYIMFQNADYGNKWFYAFVTELEFKNSAVTYVHFEIDVLQTWMFDMKFQESFIVREHVKLWNDDGTPTINTIDEGLSYGSEYDIVSVENHKPYDDMMFLVIISKSIMHGTPGEEESRLNDINASLNGMPQPLCYYIHPFYKDGKVPKTYIGDNNANLSPIVNMLTNIFSQKSAVNDIVNMYVTDYIGLKLDYKNGDKELKLDKDMFEQAGIADDKHGNVDTIFVKKIPDYEALEIDTGDKWGGFTKDQESKLMMYPYCVTEITDFKGNHMNLKTEYINNSKLKIQVRGSLGVSNKVAYSVQDYNADSALSGGNRLTASLDSSLINNNPNDIAILNDYLSAYLQGNKNSLENQKSSILFNGIMGMIGGGISAGASAAGGSALGMASSVTGMTSTAGNAVLQMQAMQAKQADIANIPPQLTKMGGNTAFDYGNGYRGVYVIKKQLKAEYRRSLSSFFHKYGYKINRVKKPNLRTRKAFNYVQTKDCFISGDINNNDLQEIRTIFDNGITLWHTDNIGNYSVENELR</sequence>
<gene>
    <name evidence="7" type="primary">9</name>
</gene>
<proteinExistence type="evidence at protein level"/>
<dbReference type="EMBL" id="M14782">
    <property type="protein sequence ID" value="AAA32282.1"/>
    <property type="molecule type" value="Genomic_DNA"/>
</dbReference>
<dbReference type="EMBL" id="EU771092">
    <property type="protein sequence ID" value="ACE96032.1"/>
    <property type="molecule type" value="Genomic_DNA"/>
</dbReference>
<dbReference type="EMBL" id="M12456">
    <property type="protein sequence ID" value="AAA32291.1"/>
    <property type="molecule type" value="Genomic_DNA"/>
</dbReference>
<dbReference type="PIR" id="D25816">
    <property type="entry name" value="WMBPT9"/>
</dbReference>
<dbReference type="PDB" id="5FB4">
    <property type="method" value="X-ray"/>
    <property type="resolution" value="2.04 A"/>
    <property type="chains" value="A/B/C=1-599"/>
</dbReference>
<dbReference type="PDB" id="5FB5">
    <property type="method" value="X-ray"/>
    <property type="resolution" value="3.50 A"/>
    <property type="chains" value="A/B=1-599"/>
</dbReference>
<dbReference type="PDB" id="5FEI">
    <property type="method" value="X-ray"/>
    <property type="resolution" value="2.60 A"/>
    <property type="chains" value="A/B=1-599"/>
</dbReference>
<dbReference type="PDBsum" id="5FB4"/>
<dbReference type="PDBsum" id="5FB5"/>
<dbReference type="PDBsum" id="5FEI"/>
<dbReference type="EMDB" id="EMD-2486"/>
<dbReference type="SMR" id="P04331"/>
<dbReference type="KEGG" id="vg:6446507"/>
<dbReference type="Proteomes" id="UP000001207">
    <property type="component" value="Genome"/>
</dbReference>
<dbReference type="GO" id="GO:0098015">
    <property type="term" value="C:virus tail"/>
    <property type="evidence" value="ECO:0000314"/>
    <property type="project" value="UniProtKB"/>
</dbReference>
<dbReference type="GO" id="GO:0098026">
    <property type="term" value="C:virus tail, tube"/>
    <property type="evidence" value="ECO:0007669"/>
    <property type="project" value="UniProtKB-KW"/>
</dbReference>
<dbReference type="GO" id="GO:0099002">
    <property type="term" value="P:symbiont genome ejection through host cell envelope, short tail mechanism"/>
    <property type="evidence" value="ECO:0007669"/>
    <property type="project" value="UniProtKB-KW"/>
</dbReference>
<dbReference type="GO" id="GO:0044694">
    <property type="term" value="P:symbiont genome entry into host cell via pore formation in plasma membrane"/>
    <property type="evidence" value="ECO:0007669"/>
    <property type="project" value="UniProtKB-KW"/>
</dbReference>
<dbReference type="InterPro" id="IPR048710">
    <property type="entry name" value="Gp9_C"/>
</dbReference>
<dbReference type="InterPro" id="IPR031772">
    <property type="entry name" value="Gp9_N"/>
</dbReference>
<dbReference type="Pfam" id="PF16838">
    <property type="entry name" value="Caud_tail_N"/>
    <property type="match status" value="1"/>
</dbReference>
<dbReference type="Pfam" id="PF20934">
    <property type="entry name" value="phi29_gp9_C"/>
    <property type="match status" value="1"/>
</dbReference>
<accession>P04331</accession>
<accession>B3VMP5</accession>
<feature type="chain" id="PRO_0000106583" description="Tail knob protein gp9">
    <location>
        <begin position="1"/>
        <end position="599"/>
    </location>
</feature>
<feature type="sequence conflict" description="In Ref. 2; ACE96032." evidence="6" ref="2">
    <original>R</original>
    <variation>S</variation>
    <location>
        <position position="41"/>
    </location>
</feature>
<feature type="sequence conflict" description="In Ref. 2; ACE96032." evidence="6" ref="2">
    <original>M</original>
    <variation>I</variation>
    <location>
        <position position="121"/>
    </location>
</feature>
<feature type="strand" evidence="8">
    <location>
        <begin position="6"/>
        <end position="15"/>
    </location>
</feature>
<feature type="strand" evidence="8">
    <location>
        <begin position="24"/>
        <end position="27"/>
    </location>
</feature>
<feature type="helix" evidence="8">
    <location>
        <begin position="32"/>
        <end position="40"/>
    </location>
</feature>
<feature type="strand" evidence="8">
    <location>
        <begin position="44"/>
        <end position="52"/>
    </location>
</feature>
<feature type="turn" evidence="8">
    <location>
        <begin position="56"/>
        <end position="59"/>
    </location>
</feature>
<feature type="strand" evidence="8">
    <location>
        <begin position="62"/>
        <end position="67"/>
    </location>
</feature>
<feature type="helix" evidence="8">
    <location>
        <begin position="69"/>
        <end position="72"/>
    </location>
</feature>
<feature type="strand" evidence="8">
    <location>
        <begin position="77"/>
        <end position="81"/>
    </location>
</feature>
<feature type="helix" evidence="8">
    <location>
        <begin position="83"/>
        <end position="85"/>
    </location>
</feature>
<feature type="strand" evidence="8">
    <location>
        <begin position="90"/>
        <end position="101"/>
    </location>
</feature>
<feature type="strand" evidence="8">
    <location>
        <begin position="104"/>
        <end position="111"/>
    </location>
</feature>
<feature type="helix" evidence="8">
    <location>
        <begin position="113"/>
        <end position="117"/>
    </location>
</feature>
<feature type="turn" evidence="8">
    <location>
        <begin position="118"/>
        <end position="120"/>
    </location>
</feature>
<feature type="strand" evidence="9">
    <location>
        <begin position="121"/>
        <end position="123"/>
    </location>
</feature>
<feature type="strand" evidence="8">
    <location>
        <begin position="126"/>
        <end position="131"/>
    </location>
</feature>
<feature type="strand" evidence="8">
    <location>
        <begin position="157"/>
        <end position="165"/>
    </location>
</feature>
<feature type="turn" evidence="8">
    <location>
        <begin position="167"/>
        <end position="170"/>
    </location>
</feature>
<feature type="strand" evidence="8">
    <location>
        <begin position="172"/>
        <end position="180"/>
    </location>
</feature>
<feature type="strand" evidence="8">
    <location>
        <begin position="199"/>
        <end position="205"/>
    </location>
</feature>
<feature type="strand" evidence="8">
    <location>
        <begin position="207"/>
        <end position="214"/>
    </location>
</feature>
<feature type="strand" evidence="8">
    <location>
        <begin position="222"/>
        <end position="225"/>
    </location>
</feature>
<feature type="helix" evidence="8">
    <location>
        <begin position="235"/>
        <end position="244"/>
    </location>
</feature>
<feature type="helix" evidence="8">
    <location>
        <begin position="246"/>
        <end position="251"/>
    </location>
</feature>
<feature type="strand" evidence="8">
    <location>
        <begin position="252"/>
        <end position="259"/>
    </location>
</feature>
<feature type="strand" evidence="8">
    <location>
        <begin position="266"/>
        <end position="268"/>
    </location>
</feature>
<feature type="turn" evidence="8">
    <location>
        <begin position="269"/>
        <end position="272"/>
    </location>
</feature>
<feature type="strand" evidence="8">
    <location>
        <begin position="273"/>
        <end position="276"/>
    </location>
</feature>
<feature type="turn" evidence="8">
    <location>
        <begin position="278"/>
        <end position="280"/>
    </location>
</feature>
<feature type="strand" evidence="8">
    <location>
        <begin position="281"/>
        <end position="286"/>
    </location>
</feature>
<feature type="strand" evidence="8">
    <location>
        <begin position="289"/>
        <end position="291"/>
    </location>
</feature>
<feature type="strand" evidence="8">
    <location>
        <begin position="294"/>
        <end position="299"/>
    </location>
</feature>
<feature type="strand" evidence="8">
    <location>
        <begin position="308"/>
        <end position="314"/>
    </location>
</feature>
<feature type="turn" evidence="8">
    <location>
        <begin position="315"/>
        <end position="318"/>
    </location>
</feature>
<feature type="helix" evidence="8">
    <location>
        <begin position="325"/>
        <end position="328"/>
    </location>
</feature>
<feature type="turn" evidence="8">
    <location>
        <begin position="330"/>
        <end position="332"/>
    </location>
</feature>
<feature type="strand" evidence="8">
    <location>
        <begin position="333"/>
        <end position="338"/>
    </location>
</feature>
<feature type="strand" evidence="8">
    <location>
        <begin position="340"/>
        <end position="342"/>
    </location>
</feature>
<feature type="strand" evidence="8">
    <location>
        <begin position="344"/>
        <end position="347"/>
    </location>
</feature>
<feature type="helix" evidence="8">
    <location>
        <begin position="349"/>
        <end position="351"/>
    </location>
</feature>
<feature type="strand" evidence="8">
    <location>
        <begin position="352"/>
        <end position="362"/>
    </location>
</feature>
<feature type="strand" evidence="8">
    <location>
        <begin position="366"/>
        <end position="368"/>
    </location>
</feature>
<feature type="strand" evidence="8">
    <location>
        <begin position="371"/>
        <end position="374"/>
    </location>
</feature>
<feature type="helix" evidence="8">
    <location>
        <begin position="386"/>
        <end position="392"/>
    </location>
</feature>
<feature type="helix" evidence="8">
    <location>
        <begin position="393"/>
        <end position="396"/>
    </location>
</feature>
<feature type="strand" evidence="8">
    <location>
        <begin position="397"/>
        <end position="400"/>
    </location>
</feature>
<feature type="helix" evidence="9">
    <location>
        <begin position="413"/>
        <end position="419"/>
    </location>
</feature>
<feature type="helix" evidence="9">
    <location>
        <begin position="423"/>
        <end position="425"/>
    </location>
</feature>
<feature type="strand" evidence="9">
    <location>
        <begin position="429"/>
        <end position="432"/>
    </location>
</feature>
<feature type="strand" evidence="9">
    <location>
        <begin position="463"/>
        <end position="465"/>
    </location>
</feature>
<feature type="helix" evidence="9">
    <location>
        <begin position="469"/>
        <end position="479"/>
    </location>
</feature>
<feature type="helix" evidence="9">
    <location>
        <begin position="493"/>
        <end position="495"/>
    </location>
</feature>
<feature type="strand" evidence="9">
    <location>
        <begin position="496"/>
        <end position="498"/>
    </location>
</feature>
<feature type="helix" evidence="8">
    <location>
        <begin position="500"/>
        <end position="505"/>
    </location>
</feature>
<feature type="strand" evidence="8">
    <location>
        <begin position="510"/>
        <end position="518"/>
    </location>
</feature>
<feature type="helix" evidence="8">
    <location>
        <begin position="520"/>
        <end position="533"/>
    </location>
</feature>
<feature type="strand" evidence="8">
    <location>
        <begin position="535"/>
        <end position="541"/>
    </location>
</feature>
<feature type="strand" evidence="8">
    <location>
        <begin position="548"/>
        <end position="558"/>
    </location>
</feature>
<feature type="strand" evidence="10">
    <location>
        <begin position="561"/>
        <end position="565"/>
    </location>
</feature>
<feature type="helix" evidence="8">
    <location>
        <begin position="567"/>
        <end position="579"/>
    </location>
</feature>
<feature type="strand" evidence="8">
    <location>
        <begin position="581"/>
        <end position="584"/>
    </location>
</feature>
<feature type="strand" evidence="8">
    <location>
        <begin position="586"/>
        <end position="588"/>
    </location>
</feature>
<organismHost>
    <name type="scientific">Bacillus subtilis</name>
    <dbReference type="NCBI Taxonomy" id="1423"/>
</organismHost>
<evidence type="ECO:0000269" key="1">
    <source>
    </source>
</evidence>
<evidence type="ECO:0000269" key="2">
    <source>
    </source>
</evidence>
<evidence type="ECO:0000269" key="3">
    <source>
    </source>
</evidence>
<evidence type="ECO:0000269" key="4">
    <source>
    </source>
</evidence>
<evidence type="ECO:0000303" key="5">
    <source>
    </source>
</evidence>
<evidence type="ECO:0000305" key="6"/>
<evidence type="ECO:0000312" key="7">
    <source>
        <dbReference type="EMBL" id="ACE96032.1"/>
    </source>
</evidence>
<evidence type="ECO:0007829" key="8">
    <source>
        <dbReference type="PDB" id="5FB4"/>
    </source>
</evidence>
<evidence type="ECO:0007829" key="9">
    <source>
        <dbReference type="PDB" id="5FB5"/>
    </source>
</evidence>
<evidence type="ECO:0007829" key="10">
    <source>
        <dbReference type="PDB" id="5FEI"/>
    </source>
</evidence>
<organism>
    <name type="scientific">Bacillus phage phi29</name>
    <name type="common">Bacteriophage phi-29</name>
    <dbReference type="NCBI Taxonomy" id="2884424"/>
    <lineage>
        <taxon>Viruses</taxon>
        <taxon>Duplodnaviria</taxon>
        <taxon>Heunggongvirae</taxon>
        <taxon>Uroviricota</taxon>
        <taxon>Caudoviricetes</taxon>
        <taxon>Salasmaviridae</taxon>
        <taxon>Picovirinae</taxon>
        <taxon>Salasvirus</taxon>
        <taxon>Salasvirus phi29</taxon>
    </lineage>
</organism>
<reference key="1">
    <citation type="journal article" date="1986" name="Gene">
        <title>Nucleotide sequence of the late region of Bacillus phage phi 29 completes the 19,285-bp sequence of phi 29 genome. Comparison with the homologous sequence of phage PZA.</title>
        <authorList>
            <person name="Vlcek C."/>
            <person name="Paces V."/>
        </authorList>
    </citation>
    <scope>NUCLEOTIDE SEQUENCE [GENOMIC DNA]</scope>
</reference>
<reference key="2">
    <citation type="submission" date="2008-05" db="EMBL/GenBank/DDBJ databases">
        <authorList>
            <person name="Villegas A.P."/>
            <person name="Lingohr E.J."/>
            <person name="Ceyssens P.-J."/>
            <person name="Kropinski A.M."/>
        </authorList>
    </citation>
    <scope>NUCLEOTIDE SEQUENCE [GENOMIC DNA]</scope>
</reference>
<reference key="3">
    <citation type="journal article" date="1984" name="Gene">
        <title>Cloning, nucleotide sequence and high level expression of the gene coding for the connector protein of Bacillus subtilis phage phi 29.</title>
        <authorList>
            <person name="Garcia J.A."/>
            <person name="Mendez E."/>
            <person name="Salas M."/>
        </authorList>
    </citation>
    <scope>NUCLEOTIDE SEQUENCE [GENOMIC DNA] OF 265-599</scope>
</reference>
<reference key="4">
    <citation type="journal article" date="1997" name="J. Virol.">
        <title>Approaches to determine stoichiometry of viral assembly components.</title>
        <authorList>
            <person name="Trottier M."/>
            <person name="Guo P."/>
        </authorList>
    </citation>
    <scope>SUBCELLULAR LOCATION</scope>
</reference>
<reference key="5">
    <citation type="journal article" date="2001" name="J. Struct. Biol.">
        <title>Composition and mass of the bacteriophage phi29 prohead and virion.</title>
        <authorList>
            <person name="Peterson C."/>
            <person name="Simon M."/>
            <person name="Hodges J."/>
            <person name="Mertens P."/>
            <person name="Higgins L."/>
            <person name="Egelman E."/>
            <person name="Anderson D."/>
        </authorList>
    </citation>
    <scope>SUBCELLULAR LOCATION</scope>
</reference>
<reference key="6">
    <citation type="journal article" date="2008" name="Proc. Natl. Acad. Sci. U.S.A.">
        <title>Crystal and cryoEM structural studies of a cell wall degrading enzyme in the bacteriophage phi29 tail.</title>
        <authorList>
            <person name="Xiang Y."/>
            <person name="Morais M.C."/>
            <person name="Cohen D.N."/>
            <person name="Bowman V.D."/>
            <person name="Anderson D.L."/>
            <person name="Rossmann M.G."/>
        </authorList>
    </citation>
    <scope>FUNCTION</scope>
    <scope>SUBCELLULAR LOCATION</scope>
</reference>
<reference key="7">
    <citation type="journal article" date="2016" name="Nature">
        <title>The bacteriophage phi29 tail possesses a pore-forming loop for cell membrane penetration.</title>
        <authorList>
            <person name="Xu J."/>
            <person name="Gui M."/>
            <person name="Wang D."/>
            <person name="Xiang Y."/>
        </authorList>
    </citation>
    <scope>X-RAY CRYSTALLOGRAPHY (2.0 ANGSTROMS)</scope>
    <scope>SUBUNIT</scope>
    <scope>FUNCTION</scope>
    <scope>SUBCELLULAR LOCATION</scope>
</reference>
<name>DIT9_BPPH2</name>